<proteinExistence type="inferred from homology"/>
<organismHost>
    <name type="scientific">Homo sapiens</name>
    <name type="common">Human</name>
    <dbReference type="NCBI Taxonomy" id="9606"/>
</organismHost>
<reference key="1">
    <citation type="journal article" date="1992" name="Virology">
        <title>Full-length sequence of a hepatitis C virus genome having poor homology to reported isolates: comparative study of four distinct genotypes.</title>
        <authorList>
            <person name="Okamoto H."/>
            <person name="Kurai K."/>
            <person name="Okada S."/>
            <person name="Yamamoto K."/>
            <person name="Lizuka H."/>
            <person name="Tanaka T."/>
            <person name="Fukuda S."/>
            <person name="Tsuda F."/>
            <person name="Mishiro S."/>
        </authorList>
    </citation>
    <scope>NUCLEOTIDE SEQUENCE [GENOMIC RNA]</scope>
</reference>
<reference key="2">
    <citation type="journal article" date="2000" name="J. Viral Hepat.">
        <title>Properties of the hepatitis C virus core protein: a structural protein that modulates cellular processes.</title>
        <authorList>
            <person name="McLauchlan J."/>
        </authorList>
    </citation>
    <scope>REVIEW</scope>
</reference>
<reference key="3">
    <citation type="journal article" date="2004" name="Hepatology">
        <title>Structural biology of hepatitis C virus.</title>
        <authorList>
            <person name="Penin F."/>
            <person name="Dubuisson J."/>
            <person name="Rey F.A."/>
            <person name="Moradpour D."/>
            <person name="Pawlotsky J.-M."/>
        </authorList>
    </citation>
    <scope>REVIEW</scope>
</reference>
<protein>
    <recommendedName>
        <fullName>Genome polyprotein</fullName>
    </recommendedName>
    <component>
        <recommendedName>
            <fullName>Core protein precursor</fullName>
        </recommendedName>
        <alternativeName>
            <fullName>Capsid protein C</fullName>
        </alternativeName>
        <alternativeName>
            <fullName>p23</fullName>
        </alternativeName>
    </component>
    <component>
        <recommendedName>
            <fullName>Mature core protein</fullName>
        </recommendedName>
        <alternativeName>
            <fullName>p21</fullName>
        </alternativeName>
    </component>
    <component>
        <recommendedName>
            <fullName>Envelope glycoprotein E1</fullName>
        </recommendedName>
        <alternativeName>
            <fullName>gp32</fullName>
        </alternativeName>
        <alternativeName>
            <fullName>gp35</fullName>
        </alternativeName>
    </component>
    <component>
        <recommendedName>
            <fullName>Envelope glycoprotein E2</fullName>
        </recommendedName>
        <alternativeName>
            <fullName>NS1</fullName>
        </alternativeName>
        <alternativeName>
            <fullName>gp68</fullName>
        </alternativeName>
        <alternativeName>
            <fullName>gp70</fullName>
        </alternativeName>
    </component>
</protein>
<name>POLG_HCVJ5</name>
<accession>P27960</accession>
<sequence>MSTNPKPQRKTKRNTNRRPQDVKFPGGGQIVGGVYLLPRRGPRLGVRATRKTSERSQPRGRRQPIPKDRRSTGKSWGKPGYPWPLYGNEGLGWAGWLLSPRGSRPSWGPNDPRHRSRNVGKVIDTLTCGFADLMGYIPVVGAPLGGVARALAHGVRVLEDGVNYATGNLPGCSFSIFLLALLSCITVPVSAVQVKNTSNSYMVTNDCSNDSITWQLQGAVLHVPGCVPCEKVGNMSRCWIPVSPNVAVRQPGALTQGLRTHIDMVVVSATLCSALYVGDLCGGVMLAAQMFIVSPQHHWFVQECNCSIYPGAITGHRMAWDMMMNWSPTATMILAYAMRVPEVIIDIISGAHWGVMFGLAYFSMQGAWAKVVVILLLAAGVDANTRTVAGSAAATTRGFTSMFSSGSKQNLQLINTNGSWHINRTALNCNDSLNTGFIASLFYVNRFNSSGCPHRLSVCRSIEAFRIGWGTLQYEDNVTNPEDMRPYCWHYPPKPCGIVPARSVCGPVYCFTPSPVVVGTTDARGVPTYTWGENETDVFLLNSTRPPRGSWFGCTWMNSTGFTKTCGAPPCRIRADFNASTDLLCPTDCFRKHSDATYIKCGSGPWLTPKCMVDYPYRLWHYPCTVNYSIFKIRMYVGGVEHRLTAACNFTRGDPCNLEDRDRSQLSPLLHSTTEWAILPCTYSDLPALSTGLLHLHQNIVDVQYMYGLSPALTKYVVRWEWVVLLFLLLADARVCA</sequence>
<feature type="initiator methionine" description="Removed; by host" evidence="3">
    <location>
        <position position="1"/>
    </location>
</feature>
<feature type="chain" id="PRO_0000450913" description="Genome polyprotein">
    <location>
        <begin position="2"/>
        <end position="737" status="greater than"/>
    </location>
</feature>
<feature type="chain" id="PRO_0000037603" description="Core protein precursor">
    <location>
        <begin position="2"/>
        <end position="191"/>
    </location>
</feature>
<feature type="chain" id="PRO_0000037604" description="Mature core protein">
    <location>
        <begin position="2"/>
        <end position="177"/>
    </location>
</feature>
<feature type="propeptide" id="PRO_0000037605" description="ER anchor for the core protein, removed in mature form by host signal peptidase">
    <location>
        <begin position="178"/>
        <end position="191"/>
    </location>
</feature>
<feature type="chain" id="PRO_0000037606" description="Envelope glycoprotein E1">
    <location>
        <begin position="192"/>
        <end position="383"/>
    </location>
</feature>
<feature type="chain" id="PRO_0000037607" description="Envelope glycoprotein E2">
    <location>
        <begin position="384"/>
        <end position="737" status="greater than"/>
    </location>
</feature>
<feature type="topological domain" description="Cytoplasmic" evidence="12">
    <location>
        <begin position="2"/>
        <end position="168"/>
    </location>
</feature>
<feature type="transmembrane region" description="Helical" evidence="12">
    <location>
        <begin position="169"/>
        <end position="189"/>
    </location>
</feature>
<feature type="topological domain" description="Lumenal" evidence="4">
    <location>
        <begin position="190"/>
        <end position="358"/>
    </location>
</feature>
<feature type="transmembrane region" description="Helical" evidence="4">
    <location>
        <begin position="359"/>
        <end position="379"/>
    </location>
</feature>
<feature type="topological domain" description="Lumenal" evidence="4">
    <location>
        <begin position="380"/>
        <end position="729"/>
    </location>
</feature>
<feature type="transmembrane region" description="Helical" evidence="4">
    <location>
        <begin position="730"/>
        <end position="737" status="greater than"/>
    </location>
</feature>
<feature type="region of interest" description="Disordered" evidence="4">
    <location>
        <begin position="2"/>
        <end position="75"/>
    </location>
</feature>
<feature type="region of interest" description="Interaction with DDX3X" evidence="8">
    <location>
        <begin position="2"/>
        <end position="59"/>
    </location>
</feature>
<feature type="region of interest" description="Interaction with EIF2AK2/PKR" evidence="1">
    <location>
        <begin position="2"/>
        <end position="58"/>
    </location>
</feature>
<feature type="region of interest" description="Interaction with STAT1" evidence="1">
    <location>
        <begin position="2"/>
        <end position="23"/>
    </location>
</feature>
<feature type="region of interest" description="Important for endoplasmic reticulum and mitochondrial localization" evidence="1">
    <location>
        <begin position="112"/>
        <end position="152"/>
    </location>
</feature>
<feature type="region of interest" description="Interaction with APOA2" evidence="5">
    <location>
        <begin position="122"/>
        <end position="173"/>
    </location>
</feature>
<feature type="region of interest" description="Important for lipid droplets localization" evidence="4">
    <location>
        <begin position="164"/>
        <end position="167"/>
    </location>
</feature>
<feature type="region of interest" description="Important for fusion" evidence="4">
    <location>
        <begin position="265"/>
        <end position="296"/>
    </location>
</feature>
<feature type="region of interest" description="HVR1" evidence="4">
    <location>
        <begin position="385"/>
        <end position="411"/>
    </location>
</feature>
<feature type="region of interest" description="HVR2" evidence="4">
    <location>
        <begin position="474"/>
        <end position="481"/>
    </location>
</feature>
<feature type="region of interest" description="CD81-binding 1" evidence="2">
    <location>
        <begin position="482"/>
        <end position="495"/>
    </location>
</feature>
<feature type="region of interest" description="CD81-binding 2" evidence="2">
    <location>
        <begin position="546"/>
        <end position="553"/>
    </location>
</feature>
<feature type="region of interest" description="PKR/eIF2-alpha phosphorylation homology domain (PePHD)">
    <location>
        <begin position="664"/>
        <end position="675"/>
    </location>
</feature>
<feature type="short sequence motif" description="Nuclear localization signal" evidence="10">
    <location>
        <begin position="5"/>
        <end position="13"/>
    </location>
</feature>
<feature type="short sequence motif" description="Nuclear localization signal" evidence="10">
    <location>
        <begin position="38"/>
        <end position="43"/>
    </location>
</feature>
<feature type="short sequence motif" description="Nuclear localization signal" evidence="10">
    <location>
        <begin position="58"/>
        <end position="64"/>
    </location>
</feature>
<feature type="short sequence motif" description="Nuclear localization signal" evidence="10">
    <location>
        <begin position="66"/>
        <end position="71"/>
    </location>
</feature>
<feature type="compositionally biased region" description="Basic residues" evidence="13">
    <location>
        <begin position="7"/>
        <end position="16"/>
    </location>
</feature>
<feature type="compositionally biased region" description="Low complexity" evidence="13">
    <location>
        <begin position="32"/>
        <end position="47"/>
    </location>
</feature>
<feature type="site" description="Cleavage; by host signal peptide peptidase" evidence="1">
    <location>
        <begin position="177"/>
        <end position="178"/>
    </location>
</feature>
<feature type="site" description="Cleavage; by host signal peptidase" evidence="1">
    <location>
        <begin position="191"/>
        <end position="192"/>
    </location>
</feature>
<feature type="site" description="Cleavage; by host signal peptidase" evidence="1">
    <location>
        <begin position="383"/>
        <end position="384"/>
    </location>
</feature>
<feature type="modified residue" description="N-acetylserine; by host" evidence="9">
    <location>
        <position position="2"/>
    </location>
</feature>
<feature type="modified residue" description="Phosphoserine; by host" evidence="6">
    <location>
        <position position="53"/>
    </location>
</feature>
<feature type="modified residue" description="Phosphoserine; by host" evidence="6">
    <location>
        <position position="99"/>
    </location>
</feature>
<feature type="modified residue" description="Phosphoserine; by host" evidence="6">
    <location>
        <position position="116"/>
    </location>
</feature>
<feature type="glycosylation site" description="N-linked (GlcNAc...) asparagine; by host" evidence="4">
    <location>
        <position position="196"/>
    </location>
</feature>
<feature type="glycosylation site" description="N-linked (GlcNAc...) asparagine; by host" evidence="4">
    <location>
        <position position="209"/>
    </location>
</feature>
<feature type="glycosylation site" description="N-linked (GlcNAc...) asparagine; by host" evidence="4">
    <location>
        <position position="234"/>
    </location>
</feature>
<feature type="glycosylation site" description="N-linked (GlcNAc...) asparagine; by host" evidence="12">
    <location>
        <position position="305"/>
    </location>
</feature>
<feature type="glycosylation site" description="N-linked (GlcNAc...) (high mannose) asparagine; by host" evidence="4">
    <location>
        <position position="417"/>
    </location>
</feature>
<feature type="glycosylation site" description="N-linked (GlcNAc...) (high mannose) asparagine; by host" evidence="4">
    <location>
        <position position="423"/>
    </location>
</feature>
<feature type="glycosylation site" description="N-linked (GlcNAc...) (high mannose) asparagine; by host" evidence="4">
    <location>
        <position position="430"/>
    </location>
</feature>
<feature type="glycosylation site" description="N-linked (GlcNAc...) (high mannose) asparagine; by host" evidence="4">
    <location>
        <position position="448"/>
    </location>
</feature>
<feature type="glycosylation site" description="N-linked (GlcNAc...) asparagine; by host" evidence="12">
    <location>
        <position position="542"/>
    </location>
</feature>
<feature type="glycosylation site" description="N-linked (GlcNAc...) (high mannose) asparagine; by host" evidence="4">
    <location>
        <position position="558"/>
    </location>
</feature>
<feature type="glycosylation site" description="N-linked (GlcNAc...) (high mannose) asparagine; by host" evidence="4">
    <location>
        <position position="627"/>
    </location>
</feature>
<feature type="glycosylation site" description="N-linked (GlcNAc...) (high mannose) asparagine; by host" evidence="4">
    <location>
        <position position="649"/>
    </location>
</feature>
<feature type="disulfide bond" evidence="4">
    <location>
        <begin position="429"/>
        <end position="554"/>
    </location>
</feature>
<feature type="disulfide bond" evidence="4">
    <location>
        <begin position="452"/>
        <end position="459"/>
    </location>
</feature>
<feature type="disulfide bond" evidence="4">
    <location>
        <begin position="488"/>
        <end position="496"/>
    </location>
</feature>
<feature type="disulfide bond" evidence="4">
    <location>
        <begin position="505"/>
        <end position="510"/>
    </location>
</feature>
<feature type="disulfide bond" evidence="4">
    <location>
        <begin position="566"/>
        <end position="571"/>
    </location>
</feature>
<feature type="disulfide bond" evidence="4">
    <location>
        <begin position="585"/>
        <end position="589"/>
    </location>
</feature>
<feature type="disulfide bond" evidence="4">
    <location>
        <begin position="601"/>
        <end position="624"/>
    </location>
</feature>
<feature type="disulfide bond" evidence="4">
    <location>
        <begin position="611"/>
        <end position="648"/>
    </location>
</feature>
<feature type="disulfide bond" evidence="4">
    <location>
        <begin position="656"/>
        <end position="681"/>
    </location>
</feature>
<feature type="non-terminal residue">
    <location>
        <position position="737"/>
    </location>
</feature>
<dbReference type="EMBL" id="D10075">
    <property type="protein sequence ID" value="BAA00969.1"/>
    <property type="molecule type" value="Genomic_RNA"/>
</dbReference>
<dbReference type="BMRB" id="P27960"/>
<dbReference type="SMR" id="P27960"/>
<dbReference type="euHCVdb" id="D10075"/>
<dbReference type="GO" id="GO:0044167">
    <property type="term" value="C:host cell endoplasmic reticulum membrane"/>
    <property type="evidence" value="ECO:0007669"/>
    <property type="project" value="UniProtKB-SubCell"/>
</dbReference>
<dbReference type="GO" id="GO:0044186">
    <property type="term" value="C:host cell lipid droplet"/>
    <property type="evidence" value="ECO:0007669"/>
    <property type="project" value="UniProtKB-SubCell"/>
</dbReference>
<dbReference type="GO" id="GO:0044191">
    <property type="term" value="C:host cell mitochondrial membrane"/>
    <property type="evidence" value="ECO:0007669"/>
    <property type="project" value="UniProtKB-SubCell"/>
</dbReference>
<dbReference type="GO" id="GO:0042025">
    <property type="term" value="C:host cell nucleus"/>
    <property type="evidence" value="ECO:0007669"/>
    <property type="project" value="UniProtKB-SubCell"/>
</dbReference>
<dbReference type="GO" id="GO:0016020">
    <property type="term" value="C:membrane"/>
    <property type="evidence" value="ECO:0007669"/>
    <property type="project" value="UniProtKB-KW"/>
</dbReference>
<dbReference type="GO" id="GO:1990904">
    <property type="term" value="C:ribonucleoprotein complex"/>
    <property type="evidence" value="ECO:0007669"/>
    <property type="project" value="UniProtKB-KW"/>
</dbReference>
<dbReference type="GO" id="GO:0019031">
    <property type="term" value="C:viral envelope"/>
    <property type="evidence" value="ECO:0007669"/>
    <property type="project" value="UniProtKB-KW"/>
</dbReference>
<dbReference type="GO" id="GO:0019013">
    <property type="term" value="C:viral nucleocapsid"/>
    <property type="evidence" value="ECO:0007669"/>
    <property type="project" value="UniProtKB-KW"/>
</dbReference>
<dbReference type="GO" id="GO:0055036">
    <property type="term" value="C:virion membrane"/>
    <property type="evidence" value="ECO:0007669"/>
    <property type="project" value="UniProtKB-SubCell"/>
</dbReference>
<dbReference type="GO" id="GO:0003723">
    <property type="term" value="F:RNA binding"/>
    <property type="evidence" value="ECO:0007669"/>
    <property type="project" value="UniProtKB-KW"/>
</dbReference>
<dbReference type="GO" id="GO:0005198">
    <property type="term" value="F:structural molecule activity"/>
    <property type="evidence" value="ECO:0007669"/>
    <property type="project" value="InterPro"/>
</dbReference>
<dbReference type="GO" id="GO:0075512">
    <property type="term" value="P:clathrin-dependent endocytosis of virus by host cell"/>
    <property type="evidence" value="ECO:0007669"/>
    <property type="project" value="UniProtKB-KW"/>
</dbReference>
<dbReference type="GO" id="GO:0039654">
    <property type="term" value="P:fusion of virus membrane with host endosome membrane"/>
    <property type="evidence" value="ECO:0007669"/>
    <property type="project" value="UniProtKB-KW"/>
</dbReference>
<dbReference type="GO" id="GO:0052170">
    <property type="term" value="P:symbiont-mediated suppression of host innate immune response"/>
    <property type="evidence" value="ECO:0007669"/>
    <property type="project" value="UniProtKB-KW"/>
</dbReference>
<dbReference type="GO" id="GO:0019062">
    <property type="term" value="P:virion attachment to host cell"/>
    <property type="evidence" value="ECO:0007669"/>
    <property type="project" value="UniProtKB-KW"/>
</dbReference>
<dbReference type="FunFam" id="3.30.160.890:FF:000001">
    <property type="entry name" value="Genome polyprotein"/>
    <property type="match status" value="1"/>
</dbReference>
<dbReference type="FunFam" id="4.10.710.10:FF:000001">
    <property type="entry name" value="Genome polyprotein"/>
    <property type="match status" value="1"/>
</dbReference>
<dbReference type="Gene3D" id="4.10.710.10">
    <property type="entry name" value="Hepatitis C Virus Capsid Protein, Chain A"/>
    <property type="match status" value="1"/>
</dbReference>
<dbReference type="Gene3D" id="3.30.160.890">
    <property type="entry name" value="Hepatitis C virus envelope glycoprotein E1, chain C"/>
    <property type="match status" value="1"/>
</dbReference>
<dbReference type="InterPro" id="IPR002521">
    <property type="entry name" value="HCV_Core_C"/>
</dbReference>
<dbReference type="InterPro" id="IPR044896">
    <property type="entry name" value="HCV_core_chain_A"/>
</dbReference>
<dbReference type="InterPro" id="IPR002522">
    <property type="entry name" value="HCV_core_N"/>
</dbReference>
<dbReference type="InterPro" id="IPR002519">
    <property type="entry name" value="HCV_Env"/>
</dbReference>
<dbReference type="InterPro" id="IPR002531">
    <property type="entry name" value="HCV_NS1"/>
</dbReference>
<dbReference type="Pfam" id="PF01543">
    <property type="entry name" value="HCV_capsid"/>
    <property type="match status" value="1"/>
</dbReference>
<dbReference type="Pfam" id="PF01542">
    <property type="entry name" value="HCV_core"/>
    <property type="match status" value="1"/>
</dbReference>
<dbReference type="Pfam" id="PF01539">
    <property type="entry name" value="HCV_env"/>
    <property type="match status" value="1"/>
</dbReference>
<dbReference type="Pfam" id="PF01560">
    <property type="entry name" value="HCV_NS1"/>
    <property type="match status" value="1"/>
</dbReference>
<comment type="function">
    <molecule>Mature core protein</molecule>
    <text evidence="1 3 4 5 10 14">Packages viral RNA to form a viral nucleocapsid, and promotes virion budding (Probable). Participates in the viral particle production as a result of its interaction with the non-structural protein 5A (By similarity). Binds RNA and may function as a RNA chaperone to induce the RNA structural rearrangements taking place during virus replication (By similarity). Modulates viral translation initiation by interacting with viral IRES and 40S ribosomal subunit (By similarity). Affects various cell signaling pathways, host immunity and lipid metabolism (Probable). Prevents the establishment of cellular antiviral state by blocking the interferon-alpha/beta (IFN-alpha/beta) and IFN-gamma signaling pathways and by blocking the formation of phosphorylated STAT1 and promoting ubiquitin-mediated proteasome-dependent degradation of STAT1 (By similarity). Activates STAT3 leading to cellular transformation (By similarity). Regulates the activity of cellular genes, including c-myc and c-fos (By similarity). May repress the promoter of p53, and sequester CREB3 and SP110 isoform 3/Sp110b in the cytoplasm (By similarity). Represses cell cycle negative regulating factor CDKN1A, thereby interrupting an important check point of normal cell cycle regulation (By similarity). Targets transcription factors involved in the regulation of inflammatory responses and in the immune response: suppresses TNF-induced NF-kappa-B activation, and activates AP-1 (By similarity). Binds to dendritic cells (DCs) via C1QR1, resulting in down-regulation of T-lymphocytes proliferation (By similarity). Alters lipid metabolism by interacting with hepatocellular proteins involved in lipid accumulation and storage (By similarity). Induces up-regulation of FAS promoter activity, and thereby contributes to the increased triglyceride accumulation in hepatocytes (steatosis) (By similarity).</text>
</comment>
<comment type="function">
    <molecule>Envelope glycoprotein E1</molecule>
    <text evidence="4">Forms a heterodimer with envelope glycoprotein E2, which mediates virus attachment to the host cell, virion internalization through clathrin-dependent endocytosis and fusion with host membrane (By similarity). Fusion with the host cell is most likely mediated by both E1 and E2, through conformational rearrangements of the heterodimer required for fusion rather than a classical class II fusion mechanism (By similarity). E1/E2 heterodimer binds host apolipoproteins such as APOB and ApoE thereby forming a lipo-viro-particle (LVP) (By similarity). APOE associated to the LVP allows the initial virus attachment to cell surface receptors such as the heparan sulfate proteoglycans (HSPGs), syndecan-1 (SDC1), syndecan-1 (SDC2), the low-density lipoprotein receptor (LDLR) and scavenger receptor class B type I (SCARB1) (By similarity). The cholesterol transfer activity of SCARB1 allows E2 exposure and binding of E2 to SCARB1 and the tetraspanin CD81 (By similarity). E1/E2 heterodimer binding on CD81 activates the epithelial growth factor receptor (EGFR) signaling pathway (By similarity). Diffusion of the complex E1-E2-EGFR-SCARB1-CD81 to the cell lateral membrane allows further interaction with Claudin 1 (CLDN1) and occludin (OCLN) to finally trigger HCV entry (By similarity).</text>
</comment>
<comment type="function">
    <molecule>Envelope glycoprotein E2</molecule>
    <text evidence="3 4">Forms a heterodimer with envelope glycoprotein E1, which mediates virus attachment to the host cell, virion internalization through clathrin-dependent endocytosis and fusion with host membrane (By similarity). Fusion with the host cell is most likely mediated by both E1 and E2, through conformational rearrangements of the heterodimer required for fusion rather than a classical class II fusion mechanism (By similarity). The interaction between envelope glycoprotein E2 and host apolipoprotein E/APOE allows the proper assembly, maturation and infectivity of the viral particles (By similarity). This interaction is probably promoted via the up-regulation of cellular autophagy by the virus (By similarity). E1/E2 heterodimer binds host apolipoproteins such as APOB and APOE thereby forming a lipo-viro-particle (LVP) (By similarity). APOE associated to the LVP allows the initial virus attachment to cell surface receptors such as the heparan sulfate proteoglycans (HSPGs), syndecan-1 (SDC1), syndecan-1 (SDC2), the low-density lipoprotein receptor (LDLR) and scavenger receptor class B type I (SCARB1) (By similarity). The cholesterol transfer activity of SCARB1 allows E2 exposure and binding of E2 to SCARB1 and the tetraspanin CD81 (By similarity). E1/E2 heterodimer binding on CD81 activates the epithelial growth factor receptor (EGFR) signaling pathway (By similarity). Diffusion of the complex E1-E2-EGFR-SCARB1-CD81 to the cell lateral membrane allows further interaction with Claudin 1 (CLDN1) and occludin (OCLN) to finally trigger HCV entry (By similarity). Inhibits host EIF2AK2/PKR activation, preventing the establishment of an antiviral state (By similarity). Viral ligand for CD209/DC-SIGN and CLEC4M/DC-SIGNR, which are respectively found on dendritic cells (DCs), and on liver sinusoidal endothelial cells and macrophage-like cells of lymph node sinuses (By similarity). These interactions allow the capture of circulating HCV particles by these cells and subsequent facilitated transmission to permissive cells such as hepatocytes and lymphocyte subpopulations (By similarity).</text>
</comment>
<comment type="subunit">
    <molecule>Mature core protein</molecule>
    <text evidence="1 3 4 5 7 8 10">Homooligomer (By similarity). Interacts with E1 (via C-terminus) (By similarity). Interacts with the non-structural protein 5A (By similarity). Interacts (via N-terminus) with host STAT1 (via SH2 domain); this interaction results in decreased STAT1 phosphorylation and ubiquitin-mediated proteasome-dependent STAT1 degradation, leading to decreased IFN-stimulated gene transcription (By similarity). Interacts with host STAT3; this interaction constitutively activates STAT3 (By similarity). Interacts with host LTBR receptor (By similarity). Interacts with host TNFRSF1A receptor and possibly induces apoptosis (By similarity). Interacts with host HNRPK (By similarity). Interacts with host YWHAE (By similarity). Interacts with host UBE3A/E6AP (By similarity). Interacts with host DDX3X (By similarity). Interacts with host APOA2 (By similarity). Interacts with host RXRA protein (By similarity). Interacts with host SP110 isoform 3/Sp110b; this interaction sequesters the transcriptional corepressor SP110 away from the nucleus (By similarity). Interacts with host CREB3 nuclear transcription protein; this interaction triggers cell transformation (By similarity). Interacts with host ACY3 (By similarity). Interacts with host C1QR1 (By similarity). Interacts with host RBM24; this interaction, which enhances the interaction of the mature core protein with 5'-UTR, may inhibit viral translation and favor replication (By similarity). Interacts with host EIF2AK2/PKR; this interaction induces the autophosphorylation of EIF2AK2 (By similarity). Part of the viral assembly initiation complex composed of NS2, E1, E2, NS3, NS4A, NS5A and the mature core protein (By similarity).</text>
</comment>
<comment type="subunit">
    <molecule>Envelope glycoprotein E1</molecule>
    <text evidence="4 10">Forms a heterodimer with envelope glycoprotein E2 (By similarity). Interacts with mature core protein (By similarity). Interacts with protease NS2 (By similarity). The heterodimer E1/E2 interacts with host CLDN1; this interaction plays a role in viral entry into host cell (By similarity). Interacts with host SPSB2 (via C-terminus) (By similarity). Part of the viral assembly initiation complex composed of NS2, E1, E2, NS3, NS4A, NS5A and the mature core protein (By similarity).</text>
</comment>
<comment type="subunit">
    <molecule>Envelope glycoprotein E2</molecule>
    <text evidence="4 10">Forms a heterodimer with envelope glycoprotein E1 (By similarity). Interacts with host CD81 and SCARB1 receptors; these interactions play a role in viral entry into host cell (By similarity). Interacts with host EIF2AK2/PKR; this interaction inhibits EIF2AK2 and probably allows the virus to evade the innate immune response (By similarity). Interacts with host CD209/DC-SIGN and CLEC4M/DC-SIGNR (By similarity). Interact with host SPCS1; this interaction is essential for viral particle assembly (By similarity). Interacts with protease NS2 (By similarity). The heterodimer E1/E2 interacts with host CLDN1; this interaction plays a role in viral entry into host cell (By similarity). Part of the viral assembly initiation complex composed of NS2, E1, E2, NS3, NS4A, NS5A and the mature core protein (By similarity).</text>
</comment>
<comment type="subcellular location">
    <molecule>Core protein precursor</molecule>
    <subcellularLocation>
        <location evidence="3">Host endoplasmic reticulum membrane</location>
        <topology evidence="12">Single-pass membrane protein</topology>
    </subcellularLocation>
    <subcellularLocation>
        <location evidence="3">Host mitochondrion membrane</location>
        <topology evidence="12">Single-pass type I membrane protein</topology>
    </subcellularLocation>
    <text>The C-terminal transmembrane domain of the core protein precursor contains an ER signal leading the nascent polyprotein to the ER membrane.</text>
</comment>
<comment type="subcellular location">
    <molecule>Mature core protein</molecule>
    <subcellularLocation>
        <location evidence="10">Virion</location>
    </subcellularLocation>
    <subcellularLocation>
        <location evidence="10">Host cytoplasm</location>
    </subcellularLocation>
    <subcellularLocation>
        <location evidence="1">Host nucleus</location>
    </subcellularLocation>
    <subcellularLocation>
        <location evidence="10">Host lipid droplet</location>
    </subcellularLocation>
    <text evidence="4">Only a minor proportion of core protein is present in the nucleus (By similarity). Probably present on the surface of lipid droplets (By similarity).</text>
</comment>
<comment type="subcellular location">
    <molecule>Envelope glycoprotein E1</molecule>
    <subcellularLocation>
        <location evidence="14">Virion membrane</location>
        <topology evidence="14">Single-pass type I membrane protein</topology>
    </subcellularLocation>
    <subcellularLocation>
        <location>Host endoplasmic reticulum membrane</location>
        <topology evidence="4">Single-pass type I membrane protein</topology>
    </subcellularLocation>
    <text evidence="4">The C-terminal transmembrane domain acts as a signal sequence and forms a hairpin structure before cleavage by host signal peptidase (By similarity). After cleavage, the membrane sequence is retained at the C-terminus of the protein, serving as ER membrane anchor (By similarity). A reorientation of the second hydrophobic stretch occurs after cleavage producing a single reoriented transmembrane domain (By similarity). These events explain the final topology of the protein (By similarity).</text>
</comment>
<comment type="subcellular location">
    <molecule>Envelope glycoprotein E2</molecule>
    <subcellularLocation>
        <location evidence="14">Virion membrane</location>
        <topology evidence="14">Single-pass type I membrane protein</topology>
    </subcellularLocation>
    <subcellularLocation>
        <location>Host endoplasmic reticulum membrane</location>
        <topology evidence="4">Single-pass type I membrane protein</topology>
    </subcellularLocation>
    <subcellularLocation>
        <location evidence="11">Host lipid droplet</location>
    </subcellularLocation>
    <text evidence="4">The C-terminal transmembrane domain acts as a signal sequence and forms a hairpin structure before cleavage by host signal peptidase (By similarity). After cleavage, the membrane sequence is retained at the C-terminus of the protein, serving as ER membrane anchor (By similarity). A reorientation of the second hydrophobic stretch occurs after cleavage producing a single reoriented transmembrane domain (By similarity). These events explain the final topology of the protein (By similarity).</text>
</comment>
<comment type="domain">
    <molecule>Envelope glycoprotein E1</molecule>
    <text evidence="4">The transmembrane regions of envelope E1 and E2 glycoproteins are involved in heterodimer formation, ER localization, and assembly of these proteins.</text>
</comment>
<comment type="domain">
    <molecule>Envelope glycoprotein E2</molecule>
    <text evidence="2 4">The transmembrane regions of envelope E1 and E2 glycoproteins are involved in heterodimer formation, ER localization, and assembly of these proteins (By similarity). Envelope E2 glycoprotein contain two highly variable regions called hypervariable region 1 and 2 (HVR1 and HVR2) (By similarity). E2 also contain two segments involved in CD81-binding (By similarity). HVR1 is implicated in the SCARB1-mediated cell entry and probably acts as a regulator of the association of particles with lipids (By similarity).</text>
</comment>
<comment type="PTM">
    <molecule>Genome polyprotein</molecule>
    <text evidence="3 4">Specific enzymatic cleavages in vivo yield mature proteins (By similarity). The structural proteins, core, E1, E2 and p7 are produced by proteolytic processing by host signal peptidases (By similarity). The core protein precursor is synthesized as a 23 kDa, which is retained in the ER membrane through the hydrophobic signal peptide (By similarity). Cleavage by the signal peptidase releases the 21 kDa mature core protein (By similarity). The cleavage of the core protein precursor occurs between aminoacids 176 and 188 but the exact cleavage site is not known (By similarity). Some degraded forms of the core protein appear as well during the course of infection (By similarity). The other proteins (p7, NS2, NS3, NS4A, NS4B, NS5A and NS5B) are cleaved by the viral proteases (By similarity). Autoprocessing between NS2 and NS3 is mediated by the NS2 cysteine protease catalytic domain and regulated by the NS3 N-terminal domain (By similarity).</text>
</comment>
<comment type="PTM">
    <molecule>Mature core protein</molecule>
    <text evidence="6">Phosphorylated by host PKC and PKA.</text>
</comment>
<comment type="PTM">
    <molecule>Mature core protein</molecule>
    <text evidence="7">Ubiquitinated; mediated by UBE3A and leading to core protein subsequent proteasomal degradation.</text>
</comment>
<comment type="PTM">
    <molecule>Envelope glycoprotein E1</molecule>
    <text evidence="4">Highly N-glycosylated.</text>
</comment>
<comment type="PTM">
    <molecule>Envelope glycoprotein E2</molecule>
    <text evidence="4">Highly N-glycosylated.</text>
</comment>
<comment type="miscellaneous">
    <text evidence="14">Viral particle assembly takes place at the surface of ER-derived membranes in close proximity to lipid droplets. NS2 associates with E1/E2 glycoproteins, NS3 and NS5A, which interacts with the viral RNA and core protein to promote genome encapsidation. The nucleocapsid buds at the ER membrane where E1/E2 glycoproteins are anchored and afterward associate with nascent lipid droplet to acquire APOE and APOC. Secretion of viral particles is probably regulated by viroporin p7.</text>
</comment>
<comment type="miscellaneous">
    <molecule>Mature core protein</molecule>
    <text evidence="1">Exerts viral interference on hepatitis B virus when HCV and HBV coinfect the same cell, by suppressing HBV gene expression, RNA encapsidation and budding.</text>
</comment>
<comment type="similarity">
    <text evidence="14">Belongs to the hepacivirus polyprotein family.</text>
</comment>
<comment type="caution">
    <text evidence="14">The core gene probably also codes for alternative reading frame proteins (ARFPs). Many functions depicted for the core protein might belong to the ARFPs.</text>
</comment>
<organism>
    <name type="scientific">Hepatitis C virus (isolate HC-J5)</name>
    <name type="common">HCV</name>
    <dbReference type="NCBI Taxonomy" id="11112"/>
    <lineage>
        <taxon>Viruses</taxon>
        <taxon>Riboviria</taxon>
        <taxon>Orthornavirae</taxon>
        <taxon>Kitrinoviricota</taxon>
        <taxon>Flasuviricetes</taxon>
        <taxon>Amarillovirales</taxon>
        <taxon>Flaviviridae</taxon>
        <taxon>Hepacivirus</taxon>
        <taxon>Hepacivirus hominis</taxon>
    </lineage>
</organism>
<keyword id="KW-0007">Acetylation</keyword>
<keyword id="KW-0053">Apoptosis</keyword>
<keyword id="KW-0167">Capsid protein</keyword>
<keyword id="KW-1165">Clathrin-mediated endocytosis of virus by host</keyword>
<keyword id="KW-1015">Disulfide bond</keyword>
<keyword id="KW-1170">Fusion of virus membrane with host endosomal membrane</keyword>
<keyword id="KW-1168">Fusion of virus membrane with host membrane</keyword>
<keyword id="KW-0325">Glycoprotein</keyword>
<keyword id="KW-1035">Host cytoplasm</keyword>
<keyword id="KW-1038">Host endoplasmic reticulum</keyword>
<keyword id="KW-1041">Host lipid droplet</keyword>
<keyword id="KW-1043">Host membrane</keyword>
<keyword id="KW-1045">Host mitochondrion</keyword>
<keyword id="KW-1048">Host nucleus</keyword>
<keyword id="KW-0945">Host-virus interaction</keyword>
<keyword id="KW-1090">Inhibition of host innate immune response by virus</keyword>
<keyword id="KW-0922">Interferon antiviral system evasion</keyword>
<keyword id="KW-0472">Membrane</keyword>
<keyword id="KW-0553">Oncogene</keyword>
<keyword id="KW-0597">Phosphoprotein</keyword>
<keyword id="KW-0687">Ribonucleoprotein</keyword>
<keyword id="KW-0694">RNA-binding</keyword>
<keyword id="KW-0812">Transmembrane</keyword>
<keyword id="KW-1133">Transmembrane helix</keyword>
<keyword id="KW-0832">Ubl conjugation</keyword>
<keyword id="KW-1161">Viral attachment to host cell</keyword>
<keyword id="KW-0261">Viral envelope protein</keyword>
<keyword id="KW-0899">Viral immunoevasion</keyword>
<keyword id="KW-0543">Viral nucleoprotein</keyword>
<keyword id="KW-1162">Viral penetration into host cytoplasm</keyword>
<keyword id="KW-0946">Virion</keyword>
<keyword id="KW-1164">Virus endocytosis by host</keyword>
<keyword id="KW-1160">Virus entry into host cell</keyword>
<evidence type="ECO:0000250" key="1">
    <source>
        <dbReference type="UniProtKB" id="P26662"/>
    </source>
</evidence>
<evidence type="ECO:0000250" key="2">
    <source>
        <dbReference type="UniProtKB" id="P26663"/>
    </source>
</evidence>
<evidence type="ECO:0000250" key="3">
    <source>
        <dbReference type="UniProtKB" id="P26664"/>
    </source>
</evidence>
<evidence type="ECO:0000250" key="4">
    <source>
        <dbReference type="UniProtKB" id="P27958"/>
    </source>
</evidence>
<evidence type="ECO:0000250" key="5">
    <source>
        <dbReference type="UniProtKB" id="P29846"/>
    </source>
</evidence>
<evidence type="ECO:0000250" key="6">
    <source>
        <dbReference type="UniProtKB" id="Q01403"/>
    </source>
</evidence>
<evidence type="ECO:0000250" key="7">
    <source>
        <dbReference type="UniProtKB" id="Q03463"/>
    </source>
</evidence>
<evidence type="ECO:0000250" key="8">
    <source>
        <dbReference type="UniProtKB" id="Q5EG65"/>
    </source>
</evidence>
<evidence type="ECO:0000250" key="9">
    <source>
        <dbReference type="UniProtKB" id="Q913V3"/>
    </source>
</evidence>
<evidence type="ECO:0000250" key="10">
    <source>
        <dbReference type="UniProtKB" id="Q99IB8"/>
    </source>
</evidence>
<evidence type="ECO:0000250" key="11">
    <source>
        <dbReference type="UniProtKB" id="Q9WMX2"/>
    </source>
</evidence>
<evidence type="ECO:0000255" key="12"/>
<evidence type="ECO:0000256" key="13">
    <source>
        <dbReference type="SAM" id="MobiDB-lite"/>
    </source>
</evidence>
<evidence type="ECO:0000305" key="14"/>